<sequence length="126" mass="14836">MSDLRRKGWWNVPDYFYSPLVFDMEEDQEDYIFGPDDEYLHTLEVHSNTLIQLERWFSPTGQTRVTVVGPLKARLWVMDMIRKVGSKNTLDKIKGKLMLLHIRSHPLTDQDLQIHLISGSSCWFPD</sequence>
<gene>
    <name type="primary">Khdc1b</name>
</gene>
<comment type="similarity">
    <text evidence="1">Belongs to the KHDC1 family.</text>
</comment>
<comment type="sequence caution" evidence="1">
    <conflict type="frameshift">
        <sequence resource="EMBL" id="AK139842"/>
    </conflict>
</comment>
<organism>
    <name type="scientific">Mus musculus</name>
    <name type="common">Mouse</name>
    <dbReference type="NCBI Taxonomy" id="10090"/>
    <lineage>
        <taxon>Eukaryota</taxon>
        <taxon>Metazoa</taxon>
        <taxon>Chordata</taxon>
        <taxon>Craniata</taxon>
        <taxon>Vertebrata</taxon>
        <taxon>Euteleostomi</taxon>
        <taxon>Mammalia</taxon>
        <taxon>Eutheria</taxon>
        <taxon>Euarchontoglires</taxon>
        <taxon>Glires</taxon>
        <taxon>Rodentia</taxon>
        <taxon>Myomorpha</taxon>
        <taxon>Muroidea</taxon>
        <taxon>Muridae</taxon>
        <taxon>Murinae</taxon>
        <taxon>Mus</taxon>
        <taxon>Mus</taxon>
    </lineage>
</organism>
<reference key="1">
    <citation type="journal article" date="2005" name="Science">
        <title>The transcriptional landscape of the mammalian genome.</title>
        <authorList>
            <person name="Carninci P."/>
            <person name="Kasukawa T."/>
            <person name="Katayama S."/>
            <person name="Gough J."/>
            <person name="Frith M.C."/>
            <person name="Maeda N."/>
            <person name="Oyama R."/>
            <person name="Ravasi T."/>
            <person name="Lenhard B."/>
            <person name="Wells C."/>
            <person name="Kodzius R."/>
            <person name="Shimokawa K."/>
            <person name="Bajic V.B."/>
            <person name="Brenner S.E."/>
            <person name="Batalov S."/>
            <person name="Forrest A.R."/>
            <person name="Zavolan M."/>
            <person name="Davis M.J."/>
            <person name="Wilming L.G."/>
            <person name="Aidinis V."/>
            <person name="Allen J.E."/>
            <person name="Ambesi-Impiombato A."/>
            <person name="Apweiler R."/>
            <person name="Aturaliya R.N."/>
            <person name="Bailey T.L."/>
            <person name="Bansal M."/>
            <person name="Baxter L."/>
            <person name="Beisel K.W."/>
            <person name="Bersano T."/>
            <person name="Bono H."/>
            <person name="Chalk A.M."/>
            <person name="Chiu K.P."/>
            <person name="Choudhary V."/>
            <person name="Christoffels A."/>
            <person name="Clutterbuck D.R."/>
            <person name="Crowe M.L."/>
            <person name="Dalla E."/>
            <person name="Dalrymple B.P."/>
            <person name="de Bono B."/>
            <person name="Della Gatta G."/>
            <person name="di Bernardo D."/>
            <person name="Down T."/>
            <person name="Engstrom P."/>
            <person name="Fagiolini M."/>
            <person name="Faulkner G."/>
            <person name="Fletcher C.F."/>
            <person name="Fukushima T."/>
            <person name="Furuno M."/>
            <person name="Futaki S."/>
            <person name="Gariboldi M."/>
            <person name="Georgii-Hemming P."/>
            <person name="Gingeras T.R."/>
            <person name="Gojobori T."/>
            <person name="Green R.E."/>
            <person name="Gustincich S."/>
            <person name="Harbers M."/>
            <person name="Hayashi Y."/>
            <person name="Hensch T.K."/>
            <person name="Hirokawa N."/>
            <person name="Hill D."/>
            <person name="Huminiecki L."/>
            <person name="Iacono M."/>
            <person name="Ikeo K."/>
            <person name="Iwama A."/>
            <person name="Ishikawa T."/>
            <person name="Jakt M."/>
            <person name="Kanapin A."/>
            <person name="Katoh M."/>
            <person name="Kawasawa Y."/>
            <person name="Kelso J."/>
            <person name="Kitamura H."/>
            <person name="Kitano H."/>
            <person name="Kollias G."/>
            <person name="Krishnan S.P."/>
            <person name="Kruger A."/>
            <person name="Kummerfeld S.K."/>
            <person name="Kurochkin I.V."/>
            <person name="Lareau L.F."/>
            <person name="Lazarevic D."/>
            <person name="Lipovich L."/>
            <person name="Liu J."/>
            <person name="Liuni S."/>
            <person name="McWilliam S."/>
            <person name="Madan Babu M."/>
            <person name="Madera M."/>
            <person name="Marchionni L."/>
            <person name="Matsuda H."/>
            <person name="Matsuzawa S."/>
            <person name="Miki H."/>
            <person name="Mignone F."/>
            <person name="Miyake S."/>
            <person name="Morris K."/>
            <person name="Mottagui-Tabar S."/>
            <person name="Mulder N."/>
            <person name="Nakano N."/>
            <person name="Nakauchi H."/>
            <person name="Ng P."/>
            <person name="Nilsson R."/>
            <person name="Nishiguchi S."/>
            <person name="Nishikawa S."/>
            <person name="Nori F."/>
            <person name="Ohara O."/>
            <person name="Okazaki Y."/>
            <person name="Orlando V."/>
            <person name="Pang K.C."/>
            <person name="Pavan W.J."/>
            <person name="Pavesi G."/>
            <person name="Pesole G."/>
            <person name="Petrovsky N."/>
            <person name="Piazza S."/>
            <person name="Reed J."/>
            <person name="Reid J.F."/>
            <person name="Ring B.Z."/>
            <person name="Ringwald M."/>
            <person name="Rost B."/>
            <person name="Ruan Y."/>
            <person name="Salzberg S.L."/>
            <person name="Sandelin A."/>
            <person name="Schneider C."/>
            <person name="Schoenbach C."/>
            <person name="Sekiguchi K."/>
            <person name="Semple C.A."/>
            <person name="Seno S."/>
            <person name="Sessa L."/>
            <person name="Sheng Y."/>
            <person name="Shibata Y."/>
            <person name="Shimada H."/>
            <person name="Shimada K."/>
            <person name="Silva D."/>
            <person name="Sinclair B."/>
            <person name="Sperling S."/>
            <person name="Stupka E."/>
            <person name="Sugiura K."/>
            <person name="Sultana R."/>
            <person name="Takenaka Y."/>
            <person name="Taki K."/>
            <person name="Tammoja K."/>
            <person name="Tan S.L."/>
            <person name="Tang S."/>
            <person name="Taylor M.S."/>
            <person name="Tegner J."/>
            <person name="Teichmann S.A."/>
            <person name="Ueda H.R."/>
            <person name="van Nimwegen E."/>
            <person name="Verardo R."/>
            <person name="Wei C.L."/>
            <person name="Yagi K."/>
            <person name="Yamanishi H."/>
            <person name="Zabarovsky E."/>
            <person name="Zhu S."/>
            <person name="Zimmer A."/>
            <person name="Hide W."/>
            <person name="Bult C."/>
            <person name="Grimmond S.M."/>
            <person name="Teasdale R.D."/>
            <person name="Liu E.T."/>
            <person name="Brusic V."/>
            <person name="Quackenbush J."/>
            <person name="Wahlestedt C."/>
            <person name="Mattick J.S."/>
            <person name="Hume D.A."/>
            <person name="Kai C."/>
            <person name="Sasaki D."/>
            <person name="Tomaru Y."/>
            <person name="Fukuda S."/>
            <person name="Kanamori-Katayama M."/>
            <person name="Suzuki M."/>
            <person name="Aoki J."/>
            <person name="Arakawa T."/>
            <person name="Iida J."/>
            <person name="Imamura K."/>
            <person name="Itoh M."/>
            <person name="Kato T."/>
            <person name="Kawaji H."/>
            <person name="Kawagashira N."/>
            <person name="Kawashima T."/>
            <person name="Kojima M."/>
            <person name="Kondo S."/>
            <person name="Konno H."/>
            <person name="Nakano K."/>
            <person name="Ninomiya N."/>
            <person name="Nishio T."/>
            <person name="Okada M."/>
            <person name="Plessy C."/>
            <person name="Shibata K."/>
            <person name="Shiraki T."/>
            <person name="Suzuki S."/>
            <person name="Tagami M."/>
            <person name="Waki K."/>
            <person name="Watahiki A."/>
            <person name="Okamura-Oho Y."/>
            <person name="Suzuki H."/>
            <person name="Kawai J."/>
            <person name="Hayashizaki Y."/>
        </authorList>
    </citation>
    <scope>NUCLEOTIDE SEQUENCE [LARGE SCALE MRNA]</scope>
</reference>
<protein>
    <recommendedName>
        <fullName>KH homology domain-containing protein 1B</fullName>
    </recommendedName>
</protein>
<name>KHD1B_MOUSE</name>
<proteinExistence type="evidence at transcript level"/>
<evidence type="ECO:0000305" key="1"/>
<keyword id="KW-1185">Reference proteome</keyword>
<keyword id="KW-0694">RNA-binding</keyword>
<accession>P0C7A0</accession>
<feature type="chain" id="PRO_0000328819" description="KH homology domain-containing protein 1B">
    <location>
        <begin position="1"/>
        <end position="126"/>
    </location>
</feature>
<feature type="domain" description="KH">
    <location>
        <begin position="19"/>
        <end position="78"/>
    </location>
</feature>
<dbReference type="EMBL" id="AK139842">
    <property type="status" value="NOT_ANNOTATED_CDS"/>
    <property type="molecule type" value="mRNA"/>
</dbReference>
<dbReference type="CCDS" id="CCDS48229.1"/>
<dbReference type="RefSeq" id="NP_001106658.1">
    <property type="nucleotide sequence ID" value="NM_001113187.1"/>
</dbReference>
<dbReference type="SMR" id="P0C7A0"/>
<dbReference type="FunCoup" id="P0C7A0">
    <property type="interactions" value="64"/>
</dbReference>
<dbReference type="STRING" id="10090.ENSMUSP00000120275"/>
<dbReference type="PaxDb" id="10090-ENSMUSP00000120275"/>
<dbReference type="Ensembl" id="ENSMUST00000147615.2">
    <property type="protein sequence ID" value="ENSMUSP00000120275.2"/>
    <property type="gene ID" value="ENSMUSG00000085079.4"/>
</dbReference>
<dbReference type="GeneID" id="98582"/>
<dbReference type="KEGG" id="mmu:98582"/>
<dbReference type="UCSC" id="uc007alp.2">
    <property type="organism name" value="mouse"/>
</dbReference>
<dbReference type="AGR" id="MGI:2138477"/>
<dbReference type="CTD" id="98582"/>
<dbReference type="MGI" id="MGI:2138477">
    <property type="gene designation" value="Khdc1b"/>
</dbReference>
<dbReference type="VEuPathDB" id="HostDB:ENSMUSG00000085079"/>
<dbReference type="eggNOG" id="ENOG502TCCK">
    <property type="taxonomic scope" value="Eukaryota"/>
</dbReference>
<dbReference type="GeneTree" id="ENSGT00940000154353"/>
<dbReference type="HOGENOM" id="CLU_102222_1_0_1"/>
<dbReference type="InParanoid" id="P0C7A0"/>
<dbReference type="OMA" id="ENFHSPM"/>
<dbReference type="OrthoDB" id="9835352at2759"/>
<dbReference type="PhylomeDB" id="P0C7A0"/>
<dbReference type="TreeFam" id="TF337964"/>
<dbReference type="BioGRID-ORCS" id="98582">
    <property type="hits" value="0 hits in 76 CRISPR screens"/>
</dbReference>
<dbReference type="ChiTaRS" id="Khdc1b">
    <property type="organism name" value="mouse"/>
</dbReference>
<dbReference type="PRO" id="PR:P0C7A0"/>
<dbReference type="Proteomes" id="UP000000589">
    <property type="component" value="Chromosome 1"/>
</dbReference>
<dbReference type="RNAct" id="P0C7A0">
    <property type="molecule type" value="protein"/>
</dbReference>
<dbReference type="Bgee" id="ENSMUSG00000085079">
    <property type="expression patterns" value="Expressed in animal zygote and 25 other cell types or tissues"/>
</dbReference>
<dbReference type="GO" id="GO:0005737">
    <property type="term" value="C:cytoplasm"/>
    <property type="evidence" value="ECO:0000314"/>
    <property type="project" value="MGI"/>
</dbReference>
<dbReference type="GO" id="GO:0042802">
    <property type="term" value="F:identical protein binding"/>
    <property type="evidence" value="ECO:0000314"/>
    <property type="project" value="MGI"/>
</dbReference>
<dbReference type="GO" id="GO:0003723">
    <property type="term" value="F:RNA binding"/>
    <property type="evidence" value="ECO:0000314"/>
    <property type="project" value="MGI"/>
</dbReference>
<dbReference type="CDD" id="cd12795">
    <property type="entry name" value="FILIA_N_like"/>
    <property type="match status" value="1"/>
</dbReference>
<dbReference type="FunFam" id="3.30.1370.10:FF:000157">
    <property type="entry name" value="KH homology domain-containing protein 1C"/>
    <property type="match status" value="1"/>
</dbReference>
<dbReference type="Gene3D" id="3.30.1370.10">
    <property type="entry name" value="K Homology domain, type 1"/>
    <property type="match status" value="1"/>
</dbReference>
<dbReference type="InterPro" id="IPR036612">
    <property type="entry name" value="KH_dom_type_1_sf"/>
</dbReference>
<dbReference type="InterPro" id="IPR031952">
    <property type="entry name" value="MOEP19_KH-like"/>
</dbReference>
<dbReference type="PANTHER" id="PTHR31368">
    <property type="entry name" value="DEVELOPMENT PLURPOTENCY-ASSOCIATED PROTEIN 1/5 FAMILY MEMBER"/>
    <property type="match status" value="1"/>
</dbReference>
<dbReference type="PANTHER" id="PTHR31368:SF6">
    <property type="entry name" value="KH HOMOLOGY DOMAIN-CONTAINING PROTEIN 1"/>
    <property type="match status" value="1"/>
</dbReference>
<dbReference type="Pfam" id="PF16005">
    <property type="entry name" value="MOEP19"/>
    <property type="match status" value="1"/>
</dbReference>